<gene>
    <name evidence="1" type="primary">leuC</name>
    <name type="ordered locus">PCC8801_0217</name>
</gene>
<sequence length="468" mass="50558">MSKGTLFDKVWDAHTVQILPSGQTQLFIGLHLIHEVTSPQAFAMLRERGLKVLYPDRTVATVDHIVPTENQARPFADYLAEEMMQALEKNAQDNGIRFCHIGSGDQGIVHVIAPEQGLTQPGMTIACGDSHTSTHGAFGAIAFGIGTSQVRDVLASQTLALAKLKVRKIEVNGTLAPGVYAKDVILHIIRKLGVKGGVGYAYEYAGTTFEAMSMEERMTVCNMAIEGGARCGYINPDQVTFDYLKGRDFAPTGENWDKAVEWWQSIRSDADAEYDDVIVFDAKDIEPTVTWGITPGQGIGVSEVIPIPDSLPESDRAIAKEAYEYMQLSPGAPIKGTKVDVCFIGSCTNGRISDLREAAKFAQGHHVSPGVKAFVVPGSERVKVQAEAEGLDKIFVEAGFEWREAGCSMCLAMNPDKLQGDQISASSSNRNFKGRQGSSTGRTLLMSPAMVVAAAINGQVSDVRELVS</sequence>
<comment type="function">
    <text evidence="1">Catalyzes the isomerization between 2-isopropylmalate and 3-isopropylmalate, via the formation of 2-isopropylmaleate.</text>
</comment>
<comment type="catalytic activity">
    <reaction evidence="1">
        <text>(2R,3S)-3-isopropylmalate = (2S)-2-isopropylmalate</text>
        <dbReference type="Rhea" id="RHEA:32287"/>
        <dbReference type="ChEBI" id="CHEBI:1178"/>
        <dbReference type="ChEBI" id="CHEBI:35121"/>
        <dbReference type="EC" id="4.2.1.33"/>
    </reaction>
</comment>
<comment type="cofactor">
    <cofactor evidence="1">
        <name>[4Fe-4S] cluster</name>
        <dbReference type="ChEBI" id="CHEBI:49883"/>
    </cofactor>
    <text evidence="1">Binds 1 [4Fe-4S] cluster per subunit.</text>
</comment>
<comment type="pathway">
    <text evidence="1">Amino-acid biosynthesis; L-leucine biosynthesis; L-leucine from 3-methyl-2-oxobutanoate: step 2/4.</text>
</comment>
<comment type="subunit">
    <text evidence="1">Heterodimer of LeuC and LeuD.</text>
</comment>
<comment type="similarity">
    <text evidence="1">Belongs to the aconitase/IPM isomerase family. LeuC type 1 subfamily.</text>
</comment>
<organism>
    <name type="scientific">Rippkaea orientalis (strain PCC 8801 / RF-1)</name>
    <name type="common">Cyanothece sp. (strain PCC 8801)</name>
    <dbReference type="NCBI Taxonomy" id="41431"/>
    <lineage>
        <taxon>Bacteria</taxon>
        <taxon>Bacillati</taxon>
        <taxon>Cyanobacteriota</taxon>
        <taxon>Cyanophyceae</taxon>
        <taxon>Oscillatoriophycideae</taxon>
        <taxon>Chroococcales</taxon>
        <taxon>Aphanothecaceae</taxon>
        <taxon>Rippkaea</taxon>
        <taxon>Rippkaea orientalis</taxon>
    </lineage>
</organism>
<evidence type="ECO:0000255" key="1">
    <source>
        <dbReference type="HAMAP-Rule" id="MF_01026"/>
    </source>
</evidence>
<accession>B7K213</accession>
<protein>
    <recommendedName>
        <fullName evidence="1">3-isopropylmalate dehydratase large subunit</fullName>
        <ecNumber evidence="1">4.2.1.33</ecNumber>
    </recommendedName>
    <alternativeName>
        <fullName evidence="1">Alpha-IPM isomerase</fullName>
        <shortName evidence="1">IPMI</shortName>
    </alternativeName>
    <alternativeName>
        <fullName evidence="1">Isopropylmalate isomerase</fullName>
    </alternativeName>
</protein>
<proteinExistence type="inferred from homology"/>
<dbReference type="EC" id="4.2.1.33" evidence="1"/>
<dbReference type="EMBL" id="CP001287">
    <property type="protein sequence ID" value="ACK64320.1"/>
    <property type="molecule type" value="Genomic_DNA"/>
</dbReference>
<dbReference type="RefSeq" id="WP_012593597.1">
    <property type="nucleotide sequence ID" value="NC_011726.1"/>
</dbReference>
<dbReference type="SMR" id="B7K213"/>
<dbReference type="STRING" id="41431.PCC8801_0217"/>
<dbReference type="KEGG" id="cyp:PCC8801_0217"/>
<dbReference type="eggNOG" id="COG0065">
    <property type="taxonomic scope" value="Bacteria"/>
</dbReference>
<dbReference type="HOGENOM" id="CLU_006714_3_4_3"/>
<dbReference type="OrthoDB" id="9802769at2"/>
<dbReference type="UniPathway" id="UPA00048">
    <property type="reaction ID" value="UER00071"/>
</dbReference>
<dbReference type="Proteomes" id="UP000008204">
    <property type="component" value="Chromosome"/>
</dbReference>
<dbReference type="GO" id="GO:0003861">
    <property type="term" value="F:3-isopropylmalate dehydratase activity"/>
    <property type="evidence" value="ECO:0007669"/>
    <property type="project" value="UniProtKB-UniRule"/>
</dbReference>
<dbReference type="GO" id="GO:0051539">
    <property type="term" value="F:4 iron, 4 sulfur cluster binding"/>
    <property type="evidence" value="ECO:0007669"/>
    <property type="project" value="UniProtKB-KW"/>
</dbReference>
<dbReference type="GO" id="GO:0046872">
    <property type="term" value="F:metal ion binding"/>
    <property type="evidence" value="ECO:0007669"/>
    <property type="project" value="UniProtKB-KW"/>
</dbReference>
<dbReference type="GO" id="GO:0009098">
    <property type="term" value="P:L-leucine biosynthetic process"/>
    <property type="evidence" value="ECO:0007669"/>
    <property type="project" value="UniProtKB-UniRule"/>
</dbReference>
<dbReference type="CDD" id="cd01583">
    <property type="entry name" value="IPMI"/>
    <property type="match status" value="1"/>
</dbReference>
<dbReference type="Gene3D" id="3.30.499.10">
    <property type="entry name" value="Aconitase, domain 3"/>
    <property type="match status" value="2"/>
</dbReference>
<dbReference type="HAMAP" id="MF_01026">
    <property type="entry name" value="LeuC_type1"/>
    <property type="match status" value="1"/>
</dbReference>
<dbReference type="InterPro" id="IPR004430">
    <property type="entry name" value="3-IsopropMal_deHydase_lsu"/>
</dbReference>
<dbReference type="InterPro" id="IPR015931">
    <property type="entry name" value="Acnase/IPM_dHydase_lsu_aba_1/3"/>
</dbReference>
<dbReference type="InterPro" id="IPR001030">
    <property type="entry name" value="Acoase/IPM_deHydtase_lsu_aba"/>
</dbReference>
<dbReference type="InterPro" id="IPR018136">
    <property type="entry name" value="Aconitase_4Fe-4S_BS"/>
</dbReference>
<dbReference type="InterPro" id="IPR036008">
    <property type="entry name" value="Aconitase_4Fe-4S_dom"/>
</dbReference>
<dbReference type="InterPro" id="IPR050067">
    <property type="entry name" value="IPM_dehydratase_rel_enz"/>
</dbReference>
<dbReference type="InterPro" id="IPR033941">
    <property type="entry name" value="IPMI_cat"/>
</dbReference>
<dbReference type="NCBIfam" id="TIGR00170">
    <property type="entry name" value="leuC"/>
    <property type="match status" value="1"/>
</dbReference>
<dbReference type="NCBIfam" id="NF004016">
    <property type="entry name" value="PRK05478.1"/>
    <property type="match status" value="1"/>
</dbReference>
<dbReference type="NCBIfam" id="NF009116">
    <property type="entry name" value="PRK12466.1"/>
    <property type="match status" value="1"/>
</dbReference>
<dbReference type="PANTHER" id="PTHR43822:SF9">
    <property type="entry name" value="3-ISOPROPYLMALATE DEHYDRATASE"/>
    <property type="match status" value="1"/>
</dbReference>
<dbReference type="PANTHER" id="PTHR43822">
    <property type="entry name" value="HOMOACONITASE, MITOCHONDRIAL-RELATED"/>
    <property type="match status" value="1"/>
</dbReference>
<dbReference type="Pfam" id="PF00330">
    <property type="entry name" value="Aconitase"/>
    <property type="match status" value="1"/>
</dbReference>
<dbReference type="PRINTS" id="PR00415">
    <property type="entry name" value="ACONITASE"/>
</dbReference>
<dbReference type="SUPFAM" id="SSF53732">
    <property type="entry name" value="Aconitase iron-sulfur domain"/>
    <property type="match status" value="1"/>
</dbReference>
<dbReference type="PROSITE" id="PS00450">
    <property type="entry name" value="ACONITASE_1"/>
    <property type="match status" value="1"/>
</dbReference>
<dbReference type="PROSITE" id="PS01244">
    <property type="entry name" value="ACONITASE_2"/>
    <property type="match status" value="1"/>
</dbReference>
<name>LEUC_RIPO1</name>
<feature type="chain" id="PRO_1000135678" description="3-isopropylmalate dehydratase large subunit">
    <location>
        <begin position="1"/>
        <end position="468"/>
    </location>
</feature>
<feature type="binding site" evidence="1">
    <location>
        <position position="347"/>
    </location>
    <ligand>
        <name>[4Fe-4S] cluster</name>
        <dbReference type="ChEBI" id="CHEBI:49883"/>
    </ligand>
</feature>
<feature type="binding site" evidence="1">
    <location>
        <position position="407"/>
    </location>
    <ligand>
        <name>[4Fe-4S] cluster</name>
        <dbReference type="ChEBI" id="CHEBI:49883"/>
    </ligand>
</feature>
<feature type="binding site" evidence="1">
    <location>
        <position position="410"/>
    </location>
    <ligand>
        <name>[4Fe-4S] cluster</name>
        <dbReference type="ChEBI" id="CHEBI:49883"/>
    </ligand>
</feature>
<reference key="1">
    <citation type="journal article" date="2011" name="MBio">
        <title>Novel metabolic attributes of the genus Cyanothece, comprising a group of unicellular nitrogen-fixing Cyanobacteria.</title>
        <authorList>
            <person name="Bandyopadhyay A."/>
            <person name="Elvitigala T."/>
            <person name="Welsh E."/>
            <person name="Stockel J."/>
            <person name="Liberton M."/>
            <person name="Min H."/>
            <person name="Sherman L.A."/>
            <person name="Pakrasi H.B."/>
        </authorList>
    </citation>
    <scope>NUCLEOTIDE SEQUENCE [LARGE SCALE GENOMIC DNA]</scope>
    <source>
        <strain>PCC 8801 / RF-1</strain>
    </source>
</reference>
<keyword id="KW-0004">4Fe-4S</keyword>
<keyword id="KW-0028">Amino-acid biosynthesis</keyword>
<keyword id="KW-0100">Branched-chain amino acid biosynthesis</keyword>
<keyword id="KW-0408">Iron</keyword>
<keyword id="KW-0411">Iron-sulfur</keyword>
<keyword id="KW-0432">Leucine biosynthesis</keyword>
<keyword id="KW-0456">Lyase</keyword>
<keyword id="KW-0479">Metal-binding</keyword>
<keyword id="KW-1185">Reference proteome</keyword>